<keyword id="KW-0963">Cytoplasm</keyword>
<keyword id="KW-0489">Methyltransferase</keyword>
<keyword id="KW-1185">Reference proteome</keyword>
<keyword id="KW-0694">RNA-binding</keyword>
<keyword id="KW-0698">rRNA processing</keyword>
<keyword id="KW-0949">S-adenosyl-L-methionine</keyword>
<keyword id="KW-0808">Transferase</keyword>
<name>RLMKL_PSEPK</name>
<comment type="function">
    <text evidence="1">Specifically methylates the guanine in position 2445 (m2G2445) and the guanine in position 2069 (m7G2069) of 23S rRNA.</text>
</comment>
<comment type="catalytic activity">
    <reaction evidence="1">
        <text>guanosine(2445) in 23S rRNA + S-adenosyl-L-methionine = N(2)-methylguanosine(2445) in 23S rRNA + S-adenosyl-L-homocysteine + H(+)</text>
        <dbReference type="Rhea" id="RHEA:42740"/>
        <dbReference type="Rhea" id="RHEA-COMP:10215"/>
        <dbReference type="Rhea" id="RHEA-COMP:10216"/>
        <dbReference type="ChEBI" id="CHEBI:15378"/>
        <dbReference type="ChEBI" id="CHEBI:57856"/>
        <dbReference type="ChEBI" id="CHEBI:59789"/>
        <dbReference type="ChEBI" id="CHEBI:74269"/>
        <dbReference type="ChEBI" id="CHEBI:74481"/>
        <dbReference type="EC" id="2.1.1.173"/>
    </reaction>
</comment>
<comment type="catalytic activity">
    <reaction evidence="1">
        <text>guanosine(2069) in 23S rRNA + S-adenosyl-L-methionine = N(2)-methylguanosine(2069) in 23S rRNA + S-adenosyl-L-homocysteine + H(+)</text>
        <dbReference type="Rhea" id="RHEA:43772"/>
        <dbReference type="Rhea" id="RHEA-COMP:10688"/>
        <dbReference type="Rhea" id="RHEA-COMP:10689"/>
        <dbReference type="ChEBI" id="CHEBI:15378"/>
        <dbReference type="ChEBI" id="CHEBI:57856"/>
        <dbReference type="ChEBI" id="CHEBI:59789"/>
        <dbReference type="ChEBI" id="CHEBI:74269"/>
        <dbReference type="ChEBI" id="CHEBI:74481"/>
        <dbReference type="EC" id="2.1.1.264"/>
    </reaction>
</comment>
<comment type="subcellular location">
    <subcellularLocation>
        <location evidence="1">Cytoplasm</location>
    </subcellularLocation>
</comment>
<comment type="similarity">
    <text evidence="1">Belongs to the methyltransferase superfamily. RlmKL family.</text>
</comment>
<comment type="sequence caution" evidence="3">
    <conflict type="erroneous initiation">
        <sequence resource="EMBL-CDS" id="AAN67710"/>
    </conflict>
    <text>Extended N-terminus.</text>
</comment>
<proteinExistence type="inferred from homology"/>
<gene>
    <name evidence="1" type="primary">rlmL</name>
    <name type="ordered locus">PP_2096</name>
</gene>
<reference key="1">
    <citation type="journal article" date="2002" name="Environ. Microbiol.">
        <title>Complete genome sequence and comparative analysis of the metabolically versatile Pseudomonas putida KT2440.</title>
        <authorList>
            <person name="Nelson K.E."/>
            <person name="Weinel C."/>
            <person name="Paulsen I.T."/>
            <person name="Dodson R.J."/>
            <person name="Hilbert H."/>
            <person name="Martins dos Santos V.A.P."/>
            <person name="Fouts D.E."/>
            <person name="Gill S.R."/>
            <person name="Pop M."/>
            <person name="Holmes M."/>
            <person name="Brinkac L.M."/>
            <person name="Beanan M.J."/>
            <person name="DeBoy R.T."/>
            <person name="Daugherty S.C."/>
            <person name="Kolonay J.F."/>
            <person name="Madupu R."/>
            <person name="Nelson W.C."/>
            <person name="White O."/>
            <person name="Peterson J.D."/>
            <person name="Khouri H.M."/>
            <person name="Hance I."/>
            <person name="Chris Lee P."/>
            <person name="Holtzapple E.K."/>
            <person name="Scanlan D."/>
            <person name="Tran K."/>
            <person name="Moazzez A."/>
            <person name="Utterback T.R."/>
            <person name="Rizzo M."/>
            <person name="Lee K."/>
            <person name="Kosack D."/>
            <person name="Moestl D."/>
            <person name="Wedler H."/>
            <person name="Lauber J."/>
            <person name="Stjepandic D."/>
            <person name="Hoheisel J."/>
            <person name="Straetz M."/>
            <person name="Heim S."/>
            <person name="Kiewitz C."/>
            <person name="Eisen J.A."/>
            <person name="Timmis K.N."/>
            <person name="Duesterhoeft A."/>
            <person name="Tuemmler B."/>
            <person name="Fraser C.M."/>
        </authorList>
    </citation>
    <scope>NUCLEOTIDE SEQUENCE [LARGE SCALE GENOMIC DNA]</scope>
    <source>
        <strain>ATCC 47054 / DSM 6125 / CFBP 8728 / NCIMB 11950 / KT2440</strain>
    </source>
</reference>
<organism>
    <name type="scientific">Pseudomonas putida (strain ATCC 47054 / DSM 6125 / CFBP 8728 / NCIMB 11950 / KT2440)</name>
    <dbReference type="NCBI Taxonomy" id="160488"/>
    <lineage>
        <taxon>Bacteria</taxon>
        <taxon>Pseudomonadati</taxon>
        <taxon>Pseudomonadota</taxon>
        <taxon>Gammaproteobacteria</taxon>
        <taxon>Pseudomonadales</taxon>
        <taxon>Pseudomonadaceae</taxon>
        <taxon>Pseudomonas</taxon>
    </lineage>
</organism>
<feature type="chain" id="PRO_0000366793" description="Ribosomal RNA large subunit methyltransferase K/L">
    <location>
        <begin position="1"/>
        <end position="730"/>
    </location>
</feature>
<feature type="domain" description="THUMP" evidence="1">
    <location>
        <begin position="46"/>
        <end position="157"/>
    </location>
</feature>
<feature type="region of interest" description="Disordered" evidence="2">
    <location>
        <begin position="394"/>
        <end position="418"/>
    </location>
</feature>
<accession>Q88L39</accession>
<sequence>MSDRFELYLTCPKGLESLLAEEAKGLGLDEVREHTSAIRGAADMETAYRLCVWSRLANRVLLVLKRFSMKNADDLYDGVHAVDWADHLAADGTLAVEFSGHGSGIDNTHFGALKVKDAIVDKLRNREGLRPSVEKIDPDVRVHLRLDRGEAILSLDLSGHSLHQRGYRLQQGAAPLKENLAAAVLIRAGWPRIAAEGGALADPMCGVGTFLVEAAMIAADIAPNLKRERWGFSAWLGHVPALWRKVHDEAQARAQAGLAKPPLWIRGYEADPRLIQPGRNNVERAGLGDWVKIYQGEVSTFEPRPDQNQKGLVISNPPYGERLGDEASLLYLYQNLGERLRQACMGWEAAVFTGAPQLGKRMGIRSHKQYAFWNGALPCKLLLFKVQPDQFVTGERREAQPEGTEARQQVPQASEPARLSEGAQMFANRLQKNLKQLGKWARREQIDCYRLYDADMPEYALAVDLYQDWVHVQEYAAPRSVDPDKAQARLLDALAAIPQALGISPQRVVLKRRERQSGTRQYERQATEGRFQEVNEGGVKLLVNLTDYLDTGLFLDHRPMRMRIQREAAGKRFLNLFCYTATATVHAAKGGARSTTSVDLSKTYLDWARRNLALNGYSERNRLEQSDVMTWLEGNRDSYDLIFIDPPTFSNSKRMEGVFDVQRDHVQLLDLAMARLAPGGVLYFSNNFRKFQLDEHLMARYVVEEISAQTLDPDFARNNRIHRAWRLQLR</sequence>
<dbReference type="EC" id="2.1.1.173" evidence="1"/>
<dbReference type="EC" id="2.1.1.264" evidence="1"/>
<dbReference type="EMBL" id="AE015451">
    <property type="protein sequence ID" value="AAN67710.1"/>
    <property type="status" value="ALT_INIT"/>
    <property type="molecule type" value="Genomic_DNA"/>
</dbReference>
<dbReference type="RefSeq" id="NP_744246.3">
    <property type="nucleotide sequence ID" value="NC_002947.4"/>
</dbReference>
<dbReference type="SMR" id="Q88L39"/>
<dbReference type="STRING" id="160488.PP_2096"/>
<dbReference type="PaxDb" id="160488-PP_2096"/>
<dbReference type="KEGG" id="ppu:PP_2096"/>
<dbReference type="PATRIC" id="fig|160488.4.peg.2211"/>
<dbReference type="eggNOG" id="COG0116">
    <property type="taxonomic scope" value="Bacteria"/>
</dbReference>
<dbReference type="eggNOG" id="COG1092">
    <property type="taxonomic scope" value="Bacteria"/>
</dbReference>
<dbReference type="HOGENOM" id="CLU_014042_2_0_6"/>
<dbReference type="OrthoDB" id="9809404at2"/>
<dbReference type="Proteomes" id="UP000000556">
    <property type="component" value="Chromosome"/>
</dbReference>
<dbReference type="GO" id="GO:0005737">
    <property type="term" value="C:cytoplasm"/>
    <property type="evidence" value="ECO:0007669"/>
    <property type="project" value="UniProtKB-SubCell"/>
</dbReference>
<dbReference type="GO" id="GO:0052915">
    <property type="term" value="F:23S rRNA (guanine(2445)-N(2))-methyltransferase activity"/>
    <property type="evidence" value="ECO:0007669"/>
    <property type="project" value="UniProtKB-UniRule"/>
</dbReference>
<dbReference type="GO" id="GO:0003723">
    <property type="term" value="F:RNA binding"/>
    <property type="evidence" value="ECO:0007669"/>
    <property type="project" value="UniProtKB-KW"/>
</dbReference>
<dbReference type="GO" id="GO:0070043">
    <property type="term" value="F:rRNA (guanine-N7-)-methyltransferase activity"/>
    <property type="evidence" value="ECO:0007669"/>
    <property type="project" value="UniProtKB-UniRule"/>
</dbReference>
<dbReference type="CDD" id="cd02440">
    <property type="entry name" value="AdoMet_MTases"/>
    <property type="match status" value="1"/>
</dbReference>
<dbReference type="CDD" id="cd11715">
    <property type="entry name" value="THUMP_AdoMetMT"/>
    <property type="match status" value="1"/>
</dbReference>
<dbReference type="Gene3D" id="3.30.2130.30">
    <property type="match status" value="1"/>
</dbReference>
<dbReference type="Gene3D" id="3.30.750.80">
    <property type="entry name" value="RNA methyltransferase domain (HRMD) like"/>
    <property type="match status" value="1"/>
</dbReference>
<dbReference type="Gene3D" id="3.40.50.150">
    <property type="entry name" value="Vaccinia Virus protein VP39"/>
    <property type="match status" value="2"/>
</dbReference>
<dbReference type="HAMAP" id="MF_01858">
    <property type="entry name" value="23SrRNA_methyltr_KL"/>
    <property type="match status" value="1"/>
</dbReference>
<dbReference type="InterPro" id="IPR017244">
    <property type="entry name" value="23SrRNA_methyltr_KL"/>
</dbReference>
<dbReference type="InterPro" id="IPR002052">
    <property type="entry name" value="DNA_methylase_N6_adenine_CS"/>
</dbReference>
<dbReference type="InterPro" id="IPR000241">
    <property type="entry name" value="RlmKL-like_Mtase"/>
</dbReference>
<dbReference type="InterPro" id="IPR054170">
    <property type="entry name" value="RlmL_1st"/>
</dbReference>
<dbReference type="InterPro" id="IPR019614">
    <property type="entry name" value="SAM-dep_methyl-trfase"/>
</dbReference>
<dbReference type="InterPro" id="IPR029063">
    <property type="entry name" value="SAM-dependent_MTases_sf"/>
</dbReference>
<dbReference type="InterPro" id="IPR004114">
    <property type="entry name" value="THUMP_dom"/>
</dbReference>
<dbReference type="NCBIfam" id="NF008748">
    <property type="entry name" value="PRK11783.1"/>
    <property type="match status" value="1"/>
</dbReference>
<dbReference type="PANTHER" id="PTHR47313">
    <property type="entry name" value="RIBOSOMAL RNA LARGE SUBUNIT METHYLTRANSFERASE K/L"/>
    <property type="match status" value="1"/>
</dbReference>
<dbReference type="PANTHER" id="PTHR47313:SF1">
    <property type="entry name" value="RIBOSOMAL RNA LARGE SUBUNIT METHYLTRANSFERASE K_L"/>
    <property type="match status" value="1"/>
</dbReference>
<dbReference type="Pfam" id="PF10672">
    <property type="entry name" value="Methyltrans_SAM"/>
    <property type="match status" value="1"/>
</dbReference>
<dbReference type="Pfam" id="PF22020">
    <property type="entry name" value="RlmL_1st"/>
    <property type="match status" value="1"/>
</dbReference>
<dbReference type="Pfam" id="PF02926">
    <property type="entry name" value="THUMP"/>
    <property type="match status" value="1"/>
</dbReference>
<dbReference type="Pfam" id="PF01170">
    <property type="entry name" value="UPF0020"/>
    <property type="match status" value="1"/>
</dbReference>
<dbReference type="PIRSF" id="PIRSF037618">
    <property type="entry name" value="RNA_Mtase_bacteria_prd"/>
    <property type="match status" value="1"/>
</dbReference>
<dbReference type="SMART" id="SM00981">
    <property type="entry name" value="THUMP"/>
    <property type="match status" value="1"/>
</dbReference>
<dbReference type="SUPFAM" id="SSF53335">
    <property type="entry name" value="S-adenosyl-L-methionine-dependent methyltransferases"/>
    <property type="match status" value="2"/>
</dbReference>
<dbReference type="PROSITE" id="PS51165">
    <property type="entry name" value="THUMP"/>
    <property type="match status" value="1"/>
</dbReference>
<protein>
    <recommendedName>
        <fullName evidence="1">Ribosomal RNA large subunit methyltransferase K/L</fullName>
    </recommendedName>
    <domain>
        <recommendedName>
            <fullName evidence="1">23S rRNA m2G2445 methyltransferase</fullName>
            <ecNumber evidence="1">2.1.1.173</ecNumber>
        </recommendedName>
        <alternativeName>
            <fullName evidence="1">rRNA (guanine-N(2)-)-methyltransferase RlmL</fullName>
        </alternativeName>
    </domain>
    <domain>
        <recommendedName>
            <fullName evidence="1">23S rRNA m7G2069 methyltransferase</fullName>
            <ecNumber evidence="1">2.1.1.264</ecNumber>
        </recommendedName>
        <alternativeName>
            <fullName evidence="1">rRNA (guanine-N(7)-)-methyltransferase RlmK</fullName>
        </alternativeName>
    </domain>
</protein>
<evidence type="ECO:0000255" key="1">
    <source>
        <dbReference type="HAMAP-Rule" id="MF_01858"/>
    </source>
</evidence>
<evidence type="ECO:0000256" key="2">
    <source>
        <dbReference type="SAM" id="MobiDB-lite"/>
    </source>
</evidence>
<evidence type="ECO:0000305" key="3"/>